<feature type="chain" id="PRO_0000138235" description="CTP synthase">
    <location>
        <begin position="1"/>
        <end position="534"/>
    </location>
</feature>
<feature type="domain" description="Glutamine amidotransferase type-1" evidence="1">
    <location>
        <begin position="292"/>
        <end position="534"/>
    </location>
</feature>
<feature type="region of interest" description="Amidoligase domain" evidence="1">
    <location>
        <begin position="1"/>
        <end position="267"/>
    </location>
</feature>
<feature type="active site" description="Nucleophile; for glutamine hydrolysis" evidence="1">
    <location>
        <position position="381"/>
    </location>
</feature>
<feature type="active site" evidence="1">
    <location>
        <position position="508"/>
    </location>
</feature>
<feature type="active site" evidence="1">
    <location>
        <position position="510"/>
    </location>
</feature>
<feature type="binding site" evidence="1">
    <location>
        <position position="13"/>
    </location>
    <ligand>
        <name>CTP</name>
        <dbReference type="ChEBI" id="CHEBI:37563"/>
        <note>allosteric inhibitor</note>
    </ligand>
</feature>
<feature type="binding site" evidence="1">
    <location>
        <position position="13"/>
    </location>
    <ligand>
        <name>UTP</name>
        <dbReference type="ChEBI" id="CHEBI:46398"/>
    </ligand>
</feature>
<feature type="binding site" evidence="1">
    <location>
        <begin position="14"/>
        <end position="19"/>
    </location>
    <ligand>
        <name>ATP</name>
        <dbReference type="ChEBI" id="CHEBI:30616"/>
    </ligand>
</feature>
<feature type="binding site" evidence="1">
    <location>
        <position position="54"/>
    </location>
    <ligand>
        <name>L-glutamine</name>
        <dbReference type="ChEBI" id="CHEBI:58359"/>
    </ligand>
</feature>
<feature type="binding site" evidence="1">
    <location>
        <position position="71"/>
    </location>
    <ligand>
        <name>ATP</name>
        <dbReference type="ChEBI" id="CHEBI:30616"/>
    </ligand>
</feature>
<feature type="binding site" evidence="1">
    <location>
        <position position="71"/>
    </location>
    <ligand>
        <name>Mg(2+)</name>
        <dbReference type="ChEBI" id="CHEBI:18420"/>
    </ligand>
</feature>
<feature type="binding site" evidence="1">
    <location>
        <position position="141"/>
    </location>
    <ligand>
        <name>Mg(2+)</name>
        <dbReference type="ChEBI" id="CHEBI:18420"/>
    </ligand>
</feature>
<feature type="binding site" evidence="1">
    <location>
        <begin position="148"/>
        <end position="150"/>
    </location>
    <ligand>
        <name>CTP</name>
        <dbReference type="ChEBI" id="CHEBI:37563"/>
        <note>allosteric inhibitor</note>
    </ligand>
</feature>
<feature type="binding site" evidence="1">
    <location>
        <begin position="188"/>
        <end position="193"/>
    </location>
    <ligand>
        <name>CTP</name>
        <dbReference type="ChEBI" id="CHEBI:37563"/>
        <note>allosteric inhibitor</note>
    </ligand>
</feature>
<feature type="binding site" evidence="1">
    <location>
        <begin position="188"/>
        <end position="193"/>
    </location>
    <ligand>
        <name>UTP</name>
        <dbReference type="ChEBI" id="CHEBI:46398"/>
    </ligand>
</feature>
<feature type="binding site" evidence="1">
    <location>
        <position position="224"/>
    </location>
    <ligand>
        <name>CTP</name>
        <dbReference type="ChEBI" id="CHEBI:37563"/>
        <note>allosteric inhibitor</note>
    </ligand>
</feature>
<feature type="binding site" evidence="1">
    <location>
        <position position="224"/>
    </location>
    <ligand>
        <name>UTP</name>
        <dbReference type="ChEBI" id="CHEBI:46398"/>
    </ligand>
</feature>
<feature type="binding site" evidence="1">
    <location>
        <begin position="240"/>
        <end position="242"/>
    </location>
    <ligand>
        <name>ATP</name>
        <dbReference type="ChEBI" id="CHEBI:30616"/>
    </ligand>
</feature>
<feature type="binding site" evidence="1">
    <location>
        <position position="354"/>
    </location>
    <ligand>
        <name>L-glutamine</name>
        <dbReference type="ChEBI" id="CHEBI:58359"/>
    </ligand>
</feature>
<feature type="binding site" evidence="1">
    <location>
        <begin position="382"/>
        <end position="385"/>
    </location>
    <ligand>
        <name>L-glutamine</name>
        <dbReference type="ChEBI" id="CHEBI:58359"/>
    </ligand>
</feature>
<feature type="binding site" evidence="1">
    <location>
        <position position="405"/>
    </location>
    <ligand>
        <name>L-glutamine</name>
        <dbReference type="ChEBI" id="CHEBI:58359"/>
    </ligand>
</feature>
<feature type="binding site" evidence="1">
    <location>
        <position position="463"/>
    </location>
    <ligand>
        <name>L-glutamine</name>
        <dbReference type="ChEBI" id="CHEBI:58359"/>
    </ligand>
</feature>
<proteinExistence type="inferred from homology"/>
<sequence>MTKYIFVTGGVVSSIGKGIVAASLGRLLKNRGLKVTIQKFDPYINIDPGTMSPYQHGEVYVTDDGAETDLDLGHYERFIDINLNKYSNVTTGKIYSEVLRKERKGEYLGATVQVIPHITDALKEKIKRAASTTDSDVIITEVGGTVGDIESLPFLEALRQMKADVGSENVMYIHTTLLPYLKAAGEMKTKPTQHSVKELRGLGIQPNMLVIRTEEPVEQGIKNKLAQFCDVNSEAVIESRDVEHLYQIPLNLQAQSMDQIVCDHLKLNAPQADMTEWSAMVDKVMNLRKTTKIALVGKYVELPDAYLSVVEALKHSGYANDTAIDLKWVNANDVTVDNAADLLGDADGIIVPGGFGQRGTEGKIQAIRYARENDVPMLGICLGMQLTCVEFARHVLNMEGANSFELEPSTKYPIIDIMRDQIDIEDMGGTLRLGLYPCKLKPGSKAAMAYNNQEVVQRRHRHRYEFNNKFRPEFEAAGFVFSGVSPDNRLVEIVELKEKKFFVAAQYHPELQSRPNRPEELYTAFVTAAIKNSN</sequence>
<gene>
    <name evidence="1" type="primary">pyrG</name>
    <name type="ordered locus">SPy_1894</name>
    <name type="ordered locus">M5005_Spy1610</name>
    <name type="ORF">M5005_Spy1609</name>
</gene>
<accession>P65925</accession>
<accession>Q48WP8</accession>
<accession>Q99Y33</accession>
<comment type="function">
    <text evidence="1">Catalyzes the ATP-dependent amination of UTP to CTP with either L-glutamine or ammonia as the source of nitrogen. Regulates intracellular CTP levels through interactions with the four ribonucleotide triphosphates.</text>
</comment>
<comment type="catalytic activity">
    <reaction evidence="1">
        <text>UTP + L-glutamine + ATP + H2O = CTP + L-glutamate + ADP + phosphate + 2 H(+)</text>
        <dbReference type="Rhea" id="RHEA:26426"/>
        <dbReference type="ChEBI" id="CHEBI:15377"/>
        <dbReference type="ChEBI" id="CHEBI:15378"/>
        <dbReference type="ChEBI" id="CHEBI:29985"/>
        <dbReference type="ChEBI" id="CHEBI:30616"/>
        <dbReference type="ChEBI" id="CHEBI:37563"/>
        <dbReference type="ChEBI" id="CHEBI:43474"/>
        <dbReference type="ChEBI" id="CHEBI:46398"/>
        <dbReference type="ChEBI" id="CHEBI:58359"/>
        <dbReference type="ChEBI" id="CHEBI:456216"/>
        <dbReference type="EC" id="6.3.4.2"/>
    </reaction>
</comment>
<comment type="catalytic activity">
    <reaction evidence="1">
        <text>L-glutamine + H2O = L-glutamate + NH4(+)</text>
        <dbReference type="Rhea" id="RHEA:15889"/>
        <dbReference type="ChEBI" id="CHEBI:15377"/>
        <dbReference type="ChEBI" id="CHEBI:28938"/>
        <dbReference type="ChEBI" id="CHEBI:29985"/>
        <dbReference type="ChEBI" id="CHEBI:58359"/>
    </reaction>
</comment>
<comment type="catalytic activity">
    <reaction evidence="1">
        <text>UTP + NH4(+) + ATP = CTP + ADP + phosphate + 2 H(+)</text>
        <dbReference type="Rhea" id="RHEA:16597"/>
        <dbReference type="ChEBI" id="CHEBI:15378"/>
        <dbReference type="ChEBI" id="CHEBI:28938"/>
        <dbReference type="ChEBI" id="CHEBI:30616"/>
        <dbReference type="ChEBI" id="CHEBI:37563"/>
        <dbReference type="ChEBI" id="CHEBI:43474"/>
        <dbReference type="ChEBI" id="CHEBI:46398"/>
        <dbReference type="ChEBI" id="CHEBI:456216"/>
    </reaction>
</comment>
<comment type="activity regulation">
    <text evidence="1">Allosterically activated by GTP, when glutamine is the substrate; GTP has no effect on the reaction when ammonia is the substrate. The allosteric effector GTP functions by stabilizing the protein conformation that binds the tetrahedral intermediate(s) formed during glutamine hydrolysis. Inhibited by the product CTP, via allosteric rather than competitive inhibition.</text>
</comment>
<comment type="pathway">
    <text evidence="1">Pyrimidine metabolism; CTP biosynthesis via de novo pathway; CTP from UDP: step 2/2.</text>
</comment>
<comment type="subunit">
    <text evidence="1">Homotetramer.</text>
</comment>
<comment type="miscellaneous">
    <text evidence="1">CTPSs have evolved a hybrid strategy for distinguishing between UTP and CTP. The overlapping regions of the product feedback inhibitory and substrate sites recognize a common feature in both compounds, the triphosphate moiety. To differentiate isosteric substrate and product pyrimidine rings, an additional pocket far from the expected kinase/ligase catalytic site, specifically recognizes the cytosine and ribose portions of the product inhibitor.</text>
</comment>
<comment type="similarity">
    <text evidence="1">Belongs to the CTP synthase family.</text>
</comment>
<dbReference type="EC" id="6.3.4.2" evidence="1"/>
<dbReference type="EMBL" id="AE004092">
    <property type="protein sequence ID" value="AAK34602.1"/>
    <property type="molecule type" value="Genomic_DNA"/>
</dbReference>
<dbReference type="EMBL" id="CP000017">
    <property type="protein sequence ID" value="AAZ52228.2"/>
    <property type="molecule type" value="Genomic_DNA"/>
</dbReference>
<dbReference type="RefSeq" id="NP_269881.1">
    <property type="nucleotide sequence ID" value="NC_002737.2"/>
</dbReference>
<dbReference type="SMR" id="P65925"/>
<dbReference type="PaxDb" id="1314-HKU360_01728"/>
<dbReference type="DNASU" id="902098"/>
<dbReference type="KEGG" id="spy:SPy_1894"/>
<dbReference type="KEGG" id="spz:M5005_Spy1610"/>
<dbReference type="PATRIC" id="fig|160490.10.peg.1642"/>
<dbReference type="HOGENOM" id="CLU_011675_5_0_9"/>
<dbReference type="OMA" id="EFNNAYR"/>
<dbReference type="UniPathway" id="UPA00159">
    <property type="reaction ID" value="UER00277"/>
</dbReference>
<dbReference type="Proteomes" id="UP000000750">
    <property type="component" value="Chromosome"/>
</dbReference>
<dbReference type="GO" id="GO:0005829">
    <property type="term" value="C:cytosol"/>
    <property type="evidence" value="ECO:0007669"/>
    <property type="project" value="TreeGrafter"/>
</dbReference>
<dbReference type="GO" id="GO:0005524">
    <property type="term" value="F:ATP binding"/>
    <property type="evidence" value="ECO:0007669"/>
    <property type="project" value="UniProtKB-KW"/>
</dbReference>
<dbReference type="GO" id="GO:0003883">
    <property type="term" value="F:CTP synthase activity"/>
    <property type="evidence" value="ECO:0007669"/>
    <property type="project" value="UniProtKB-UniRule"/>
</dbReference>
<dbReference type="GO" id="GO:0004359">
    <property type="term" value="F:glutaminase activity"/>
    <property type="evidence" value="ECO:0007669"/>
    <property type="project" value="RHEA"/>
</dbReference>
<dbReference type="GO" id="GO:0042802">
    <property type="term" value="F:identical protein binding"/>
    <property type="evidence" value="ECO:0007669"/>
    <property type="project" value="TreeGrafter"/>
</dbReference>
<dbReference type="GO" id="GO:0046872">
    <property type="term" value="F:metal ion binding"/>
    <property type="evidence" value="ECO:0007669"/>
    <property type="project" value="UniProtKB-KW"/>
</dbReference>
<dbReference type="GO" id="GO:0044210">
    <property type="term" value="P:'de novo' CTP biosynthetic process"/>
    <property type="evidence" value="ECO:0007669"/>
    <property type="project" value="UniProtKB-UniRule"/>
</dbReference>
<dbReference type="GO" id="GO:0019856">
    <property type="term" value="P:pyrimidine nucleobase biosynthetic process"/>
    <property type="evidence" value="ECO:0007669"/>
    <property type="project" value="TreeGrafter"/>
</dbReference>
<dbReference type="CDD" id="cd03113">
    <property type="entry name" value="CTPS_N"/>
    <property type="match status" value="1"/>
</dbReference>
<dbReference type="CDD" id="cd01746">
    <property type="entry name" value="GATase1_CTP_Synthase"/>
    <property type="match status" value="1"/>
</dbReference>
<dbReference type="FunFam" id="3.40.50.300:FF:000009">
    <property type="entry name" value="CTP synthase"/>
    <property type="match status" value="1"/>
</dbReference>
<dbReference type="FunFam" id="3.40.50.880:FF:000002">
    <property type="entry name" value="CTP synthase"/>
    <property type="match status" value="1"/>
</dbReference>
<dbReference type="Gene3D" id="3.40.50.880">
    <property type="match status" value="1"/>
</dbReference>
<dbReference type="Gene3D" id="3.40.50.300">
    <property type="entry name" value="P-loop containing nucleotide triphosphate hydrolases"/>
    <property type="match status" value="1"/>
</dbReference>
<dbReference type="HAMAP" id="MF_01227">
    <property type="entry name" value="PyrG"/>
    <property type="match status" value="1"/>
</dbReference>
<dbReference type="InterPro" id="IPR029062">
    <property type="entry name" value="Class_I_gatase-like"/>
</dbReference>
<dbReference type="InterPro" id="IPR004468">
    <property type="entry name" value="CTP_synthase"/>
</dbReference>
<dbReference type="InterPro" id="IPR017456">
    <property type="entry name" value="CTP_synthase_N"/>
</dbReference>
<dbReference type="InterPro" id="IPR017926">
    <property type="entry name" value="GATASE"/>
</dbReference>
<dbReference type="InterPro" id="IPR033828">
    <property type="entry name" value="GATase1_CTP_Synthase"/>
</dbReference>
<dbReference type="InterPro" id="IPR027417">
    <property type="entry name" value="P-loop_NTPase"/>
</dbReference>
<dbReference type="NCBIfam" id="NF003792">
    <property type="entry name" value="PRK05380.1"/>
    <property type="match status" value="1"/>
</dbReference>
<dbReference type="NCBIfam" id="TIGR00337">
    <property type="entry name" value="PyrG"/>
    <property type="match status" value="1"/>
</dbReference>
<dbReference type="PANTHER" id="PTHR11550">
    <property type="entry name" value="CTP SYNTHASE"/>
    <property type="match status" value="1"/>
</dbReference>
<dbReference type="PANTHER" id="PTHR11550:SF0">
    <property type="entry name" value="CTP SYNTHASE-RELATED"/>
    <property type="match status" value="1"/>
</dbReference>
<dbReference type="Pfam" id="PF06418">
    <property type="entry name" value="CTP_synth_N"/>
    <property type="match status" value="1"/>
</dbReference>
<dbReference type="Pfam" id="PF00117">
    <property type="entry name" value="GATase"/>
    <property type="match status" value="1"/>
</dbReference>
<dbReference type="SUPFAM" id="SSF52317">
    <property type="entry name" value="Class I glutamine amidotransferase-like"/>
    <property type="match status" value="1"/>
</dbReference>
<dbReference type="SUPFAM" id="SSF52540">
    <property type="entry name" value="P-loop containing nucleoside triphosphate hydrolases"/>
    <property type="match status" value="1"/>
</dbReference>
<dbReference type="PROSITE" id="PS51273">
    <property type="entry name" value="GATASE_TYPE_1"/>
    <property type="match status" value="1"/>
</dbReference>
<reference key="1">
    <citation type="journal article" date="2001" name="Proc. Natl. Acad. Sci. U.S.A.">
        <title>Complete genome sequence of an M1 strain of Streptococcus pyogenes.</title>
        <authorList>
            <person name="Ferretti J.J."/>
            <person name="McShan W.M."/>
            <person name="Ajdic D.J."/>
            <person name="Savic D.J."/>
            <person name="Savic G."/>
            <person name="Lyon K."/>
            <person name="Primeaux C."/>
            <person name="Sezate S."/>
            <person name="Suvorov A.N."/>
            <person name="Kenton S."/>
            <person name="Lai H.S."/>
            <person name="Lin S.P."/>
            <person name="Qian Y."/>
            <person name="Jia H.G."/>
            <person name="Najar F.Z."/>
            <person name="Ren Q."/>
            <person name="Zhu H."/>
            <person name="Song L."/>
            <person name="White J."/>
            <person name="Yuan X."/>
            <person name="Clifton S.W."/>
            <person name="Roe B.A."/>
            <person name="McLaughlin R.E."/>
        </authorList>
    </citation>
    <scope>NUCLEOTIDE SEQUENCE [LARGE SCALE GENOMIC DNA]</scope>
    <source>
        <strain>ATCC 700294 / SF370 / Serotype M1</strain>
    </source>
</reference>
<reference key="2">
    <citation type="journal article" date="2005" name="J. Infect. Dis.">
        <title>Evolutionary origin and emergence of a highly successful clone of serotype M1 group A Streptococcus involved multiple horizontal gene transfer events.</title>
        <authorList>
            <person name="Sumby P."/>
            <person name="Porcella S.F."/>
            <person name="Madrigal A.G."/>
            <person name="Barbian K.D."/>
            <person name="Virtaneva K."/>
            <person name="Ricklefs S.M."/>
            <person name="Sturdevant D.E."/>
            <person name="Graham M.R."/>
            <person name="Vuopio-Varkila J."/>
            <person name="Hoe N.P."/>
            <person name="Musser J.M."/>
        </authorList>
    </citation>
    <scope>NUCLEOTIDE SEQUENCE [LARGE SCALE GENOMIC DNA]</scope>
    <source>
        <strain>ATCC BAA-947 / MGAS5005 / Serotype M1</strain>
    </source>
</reference>
<reference key="3">
    <citation type="submission" date="2014-04" db="EMBL/GenBank/DDBJ databases">
        <authorList>
            <person name="Beres S.B."/>
            <person name="Musser J.M."/>
        </authorList>
    </citation>
    <scope>SEQUENCE REVISION</scope>
</reference>
<evidence type="ECO:0000255" key="1">
    <source>
        <dbReference type="HAMAP-Rule" id="MF_01227"/>
    </source>
</evidence>
<organism>
    <name type="scientific">Streptococcus pyogenes serotype M1</name>
    <dbReference type="NCBI Taxonomy" id="301447"/>
    <lineage>
        <taxon>Bacteria</taxon>
        <taxon>Bacillati</taxon>
        <taxon>Bacillota</taxon>
        <taxon>Bacilli</taxon>
        <taxon>Lactobacillales</taxon>
        <taxon>Streptococcaceae</taxon>
        <taxon>Streptococcus</taxon>
    </lineage>
</organism>
<keyword id="KW-0067">ATP-binding</keyword>
<keyword id="KW-0315">Glutamine amidotransferase</keyword>
<keyword id="KW-0436">Ligase</keyword>
<keyword id="KW-0460">Magnesium</keyword>
<keyword id="KW-0479">Metal-binding</keyword>
<keyword id="KW-0547">Nucleotide-binding</keyword>
<keyword id="KW-0665">Pyrimidine biosynthesis</keyword>
<keyword id="KW-1185">Reference proteome</keyword>
<protein>
    <recommendedName>
        <fullName evidence="1">CTP synthase</fullName>
        <ecNumber evidence="1">6.3.4.2</ecNumber>
    </recommendedName>
    <alternativeName>
        <fullName evidence="1">Cytidine 5'-triphosphate synthase</fullName>
    </alternativeName>
    <alternativeName>
        <fullName evidence="1">Cytidine triphosphate synthetase</fullName>
        <shortName evidence="1">CTP synthetase</shortName>
        <shortName evidence="1">CTPS</shortName>
    </alternativeName>
    <alternativeName>
        <fullName evidence="1">UTP--ammonia ligase</fullName>
    </alternativeName>
</protein>
<name>PYRG_STRP1</name>